<organism>
    <name type="scientific">Saccharomyces cerevisiae (strain YJM789)</name>
    <name type="common">Baker's yeast</name>
    <dbReference type="NCBI Taxonomy" id="307796"/>
    <lineage>
        <taxon>Eukaryota</taxon>
        <taxon>Fungi</taxon>
        <taxon>Dikarya</taxon>
        <taxon>Ascomycota</taxon>
        <taxon>Saccharomycotina</taxon>
        <taxon>Saccharomycetes</taxon>
        <taxon>Saccharomycetales</taxon>
        <taxon>Saccharomycetaceae</taxon>
        <taxon>Saccharomyces</taxon>
    </lineage>
</organism>
<feature type="signal peptide" evidence="2">
    <location>
        <begin position="1"/>
        <end position="19"/>
    </location>
</feature>
<feature type="chain" id="PRO_0000318056" description="Autophagy-related protein 27">
    <location>
        <begin position="20"/>
        <end position="271"/>
    </location>
</feature>
<feature type="topological domain" description="Lumenal" evidence="1">
    <location>
        <begin position="20"/>
        <end position="197"/>
    </location>
</feature>
<feature type="transmembrane region" description="Helical" evidence="2">
    <location>
        <begin position="198"/>
        <end position="218"/>
    </location>
</feature>
<feature type="topological domain" description="Cytoplasmic" evidence="1">
    <location>
        <begin position="219"/>
        <end position="271"/>
    </location>
</feature>
<feature type="domain" description="MRH" evidence="3">
    <location>
        <begin position="20"/>
        <end position="166"/>
    </location>
</feature>
<feature type="region of interest" description="Disordered" evidence="4">
    <location>
        <begin position="161"/>
        <end position="190"/>
    </location>
</feature>
<feature type="compositionally biased region" description="Basic and acidic residues" evidence="4">
    <location>
        <begin position="166"/>
        <end position="189"/>
    </location>
</feature>
<feature type="disulfide bond" evidence="3">
    <location>
        <begin position="22"/>
        <end position="60"/>
    </location>
</feature>
<feature type="disulfide bond" evidence="3">
    <location>
        <begin position="71"/>
        <end position="78"/>
    </location>
</feature>
<feature type="disulfide bond" evidence="3">
    <location>
        <begin position="135"/>
        <end position="164"/>
    </location>
</feature>
<dbReference type="EMBL" id="AAFW02000044">
    <property type="protein sequence ID" value="EDN63208.1"/>
    <property type="molecule type" value="Genomic_DNA"/>
</dbReference>
<dbReference type="HOGENOM" id="CLU_089705_0_0_1"/>
<dbReference type="OrthoDB" id="7908at4893"/>
<dbReference type="Proteomes" id="UP000007060">
    <property type="component" value="Unassembled WGS sequence"/>
</dbReference>
<dbReference type="GO" id="GO:0030659">
    <property type="term" value="C:cytoplasmic vesicle membrane"/>
    <property type="evidence" value="ECO:0007669"/>
    <property type="project" value="UniProtKB-SubCell"/>
</dbReference>
<dbReference type="GO" id="GO:0000139">
    <property type="term" value="C:Golgi membrane"/>
    <property type="evidence" value="ECO:0007669"/>
    <property type="project" value="UniProtKB-SubCell"/>
</dbReference>
<dbReference type="GO" id="GO:0031966">
    <property type="term" value="C:mitochondrial membrane"/>
    <property type="evidence" value="ECO:0007669"/>
    <property type="project" value="UniProtKB-SubCell"/>
</dbReference>
<dbReference type="GO" id="GO:0034045">
    <property type="term" value="C:phagophore assembly site membrane"/>
    <property type="evidence" value="ECO:0007669"/>
    <property type="project" value="UniProtKB-SubCell"/>
</dbReference>
<dbReference type="GO" id="GO:0006914">
    <property type="term" value="P:autophagy"/>
    <property type="evidence" value="ECO:0007669"/>
    <property type="project" value="UniProtKB-KW"/>
</dbReference>
<dbReference type="GO" id="GO:0015031">
    <property type="term" value="P:protein transport"/>
    <property type="evidence" value="ECO:0007669"/>
    <property type="project" value="UniProtKB-KW"/>
</dbReference>
<dbReference type="Gene3D" id="2.70.130.10">
    <property type="entry name" value="Mannose-6-phosphate receptor binding domain"/>
    <property type="match status" value="1"/>
</dbReference>
<dbReference type="InterPro" id="IPR018939">
    <property type="entry name" value="Autophagy-rel_prot_27"/>
</dbReference>
<dbReference type="InterPro" id="IPR009011">
    <property type="entry name" value="Man6P_isomerase_rcpt-bd_dom_sf"/>
</dbReference>
<dbReference type="InterPro" id="IPR044865">
    <property type="entry name" value="MRH_dom"/>
</dbReference>
<dbReference type="Pfam" id="PF09451">
    <property type="entry name" value="ATG27"/>
    <property type="match status" value="1"/>
</dbReference>
<dbReference type="PROSITE" id="PS51914">
    <property type="entry name" value="MRH"/>
    <property type="match status" value="1"/>
</dbReference>
<name>ATG27_YEAS7</name>
<keyword id="KW-0072">Autophagy</keyword>
<keyword id="KW-0968">Cytoplasmic vesicle</keyword>
<keyword id="KW-1015">Disulfide bond</keyword>
<keyword id="KW-0333">Golgi apparatus</keyword>
<keyword id="KW-0472">Membrane</keyword>
<keyword id="KW-0496">Mitochondrion</keyword>
<keyword id="KW-0653">Protein transport</keyword>
<keyword id="KW-0732">Signal</keyword>
<keyword id="KW-0812">Transmembrane</keyword>
<keyword id="KW-1133">Transmembrane helix</keyword>
<keyword id="KW-0813">Transport</keyword>
<comment type="function">
    <text evidence="1">Effector of VPS34 phosphatidylinositol 3-phosphate kinase signaling. Regulates the cytoplasm to vacuole transport (Cvt) vesicle formation. Plays a role in ATG protein retrieval from the pre-autophagosomal structure (PAS) and is especially required for autophagy-dependent cycling of ATG9 (By similarity).</text>
</comment>
<comment type="subunit">
    <text>Forms a complex with ATG9 and ATG23.</text>
</comment>
<comment type="subcellular location">
    <subcellularLocation>
        <location evidence="1">Cytoplasmic vesicle membrane</location>
        <topology evidence="1">Single-pass type I membrane protein</topology>
    </subcellularLocation>
    <subcellularLocation>
        <location evidence="1">Golgi apparatus membrane</location>
        <topology evidence="1">Single-pass type I membrane protein</topology>
    </subcellularLocation>
    <subcellularLocation>
        <location evidence="1">Mitochondrion membrane</location>
        <topology evidence="1">Single-pass membrane protein</topology>
    </subcellularLocation>
    <subcellularLocation>
        <location evidence="1">Preautophagosomal structure membrane</location>
        <topology evidence="1">Single-pass type I membrane protein</topology>
    </subcellularLocation>
    <text evidence="1">Cycles among the pre-autophagosomal structure (PAS), mitochondria and Golgi.</text>
</comment>
<comment type="similarity">
    <text evidence="5">Belongs to the ATG27 family.</text>
</comment>
<reference key="1">
    <citation type="journal article" date="2007" name="Proc. Natl. Acad. Sci. U.S.A.">
        <title>Genome sequencing and comparative analysis of Saccharomyces cerevisiae strain YJM789.</title>
        <authorList>
            <person name="Wei W."/>
            <person name="McCusker J.H."/>
            <person name="Hyman R.W."/>
            <person name="Jones T."/>
            <person name="Ning Y."/>
            <person name="Cao Z."/>
            <person name="Gu Z."/>
            <person name="Bruno D."/>
            <person name="Miranda M."/>
            <person name="Nguyen M."/>
            <person name="Wilhelmy J."/>
            <person name="Komp C."/>
            <person name="Tamse R."/>
            <person name="Wang X."/>
            <person name="Jia P."/>
            <person name="Luedi P."/>
            <person name="Oefner P.J."/>
            <person name="David L."/>
            <person name="Dietrich F.S."/>
            <person name="Li Y."/>
            <person name="Davis R.W."/>
            <person name="Steinmetz L.M."/>
        </authorList>
    </citation>
    <scope>NUCLEOTIDE SEQUENCE [LARGE SCALE GENOMIC DNA]</scope>
    <source>
        <strain>YJM789</strain>
    </source>
</reference>
<protein>
    <recommendedName>
        <fullName>Autophagy-related protein 27</fullName>
    </recommendedName>
</protein>
<sequence length="271" mass="30255">MVSKTWICGFISIITVVQALSCEKHDVLKKYQVGKFSSLTSTERDTPPSTTIEKWWINVCEEHTVEPPEDCKKNDMLCGLTDVILPGKDAITTQIIDFDKNIGFNVEETESALTLTLKGATWGANSFDAKLEFQCNDNMKQDELTSHTWADKSIQLTLKGPSGCLKSKDDDKKNGDGDNGKDGDNEGKKPAKKAGGTLWFTWLFLYALLFTLIYLMVVSFLNTRGGSFQDFRAEFIQRSTQFLTSLPEFCREVVSRILGRSTAQRGGYSAV</sequence>
<evidence type="ECO:0000250" key="1"/>
<evidence type="ECO:0000255" key="2"/>
<evidence type="ECO:0000255" key="3">
    <source>
        <dbReference type="PROSITE-ProRule" id="PRU01262"/>
    </source>
</evidence>
<evidence type="ECO:0000256" key="4">
    <source>
        <dbReference type="SAM" id="MobiDB-lite"/>
    </source>
</evidence>
<evidence type="ECO:0000305" key="5"/>
<proteinExistence type="inferred from homology"/>
<gene>
    <name type="primary">ATG27</name>
    <name type="ORF">SCY_3117</name>
</gene>
<accession>A6ZQF6</accession>